<dbReference type="EC" id="2.4.2.29" evidence="1"/>
<dbReference type="EMBL" id="CP000227">
    <property type="protein sequence ID" value="ACM14630.1"/>
    <property type="molecule type" value="Genomic_DNA"/>
</dbReference>
<dbReference type="SMR" id="B9IYZ1"/>
<dbReference type="KEGG" id="bcq:BCQ_4203"/>
<dbReference type="HOGENOM" id="CLU_022060_0_1_9"/>
<dbReference type="UniPathway" id="UPA00392"/>
<dbReference type="Proteomes" id="UP000000441">
    <property type="component" value="Chromosome"/>
</dbReference>
<dbReference type="GO" id="GO:0005829">
    <property type="term" value="C:cytosol"/>
    <property type="evidence" value="ECO:0007669"/>
    <property type="project" value="TreeGrafter"/>
</dbReference>
<dbReference type="GO" id="GO:0046872">
    <property type="term" value="F:metal ion binding"/>
    <property type="evidence" value="ECO:0007669"/>
    <property type="project" value="UniProtKB-KW"/>
</dbReference>
<dbReference type="GO" id="GO:0008479">
    <property type="term" value="F:tRNA-guanosine(34) queuine transglycosylase activity"/>
    <property type="evidence" value="ECO:0007669"/>
    <property type="project" value="UniProtKB-UniRule"/>
</dbReference>
<dbReference type="GO" id="GO:0008616">
    <property type="term" value="P:queuosine biosynthetic process"/>
    <property type="evidence" value="ECO:0007669"/>
    <property type="project" value="UniProtKB-UniRule"/>
</dbReference>
<dbReference type="GO" id="GO:0002099">
    <property type="term" value="P:tRNA wobble guanine modification"/>
    <property type="evidence" value="ECO:0007669"/>
    <property type="project" value="TreeGrafter"/>
</dbReference>
<dbReference type="GO" id="GO:0101030">
    <property type="term" value="P:tRNA-guanine transglycosylation"/>
    <property type="evidence" value="ECO:0007669"/>
    <property type="project" value="InterPro"/>
</dbReference>
<dbReference type="FunFam" id="3.20.20.105:FF:000001">
    <property type="entry name" value="Queuine tRNA-ribosyltransferase"/>
    <property type="match status" value="1"/>
</dbReference>
<dbReference type="Gene3D" id="3.20.20.105">
    <property type="entry name" value="Queuine tRNA-ribosyltransferase-like"/>
    <property type="match status" value="1"/>
</dbReference>
<dbReference type="HAMAP" id="MF_00168">
    <property type="entry name" value="Q_tRNA_Tgt"/>
    <property type="match status" value="1"/>
</dbReference>
<dbReference type="InterPro" id="IPR050076">
    <property type="entry name" value="ArchSynthase1/Queuine_TRR"/>
</dbReference>
<dbReference type="InterPro" id="IPR004803">
    <property type="entry name" value="TGT"/>
</dbReference>
<dbReference type="InterPro" id="IPR036511">
    <property type="entry name" value="TGT-like_sf"/>
</dbReference>
<dbReference type="InterPro" id="IPR002616">
    <property type="entry name" value="tRNA_ribo_trans-like"/>
</dbReference>
<dbReference type="NCBIfam" id="TIGR00430">
    <property type="entry name" value="Q_tRNA_tgt"/>
    <property type="match status" value="1"/>
</dbReference>
<dbReference type="NCBIfam" id="TIGR00449">
    <property type="entry name" value="tgt_general"/>
    <property type="match status" value="1"/>
</dbReference>
<dbReference type="PANTHER" id="PTHR46499">
    <property type="entry name" value="QUEUINE TRNA-RIBOSYLTRANSFERASE"/>
    <property type="match status" value="1"/>
</dbReference>
<dbReference type="PANTHER" id="PTHR46499:SF1">
    <property type="entry name" value="QUEUINE TRNA-RIBOSYLTRANSFERASE"/>
    <property type="match status" value="1"/>
</dbReference>
<dbReference type="Pfam" id="PF01702">
    <property type="entry name" value="TGT"/>
    <property type="match status" value="1"/>
</dbReference>
<dbReference type="SUPFAM" id="SSF51713">
    <property type="entry name" value="tRNA-guanine transglycosylase"/>
    <property type="match status" value="1"/>
</dbReference>
<feature type="chain" id="PRO_1000197984" description="Queuine tRNA-ribosyltransferase">
    <location>
        <begin position="1"/>
        <end position="379"/>
    </location>
</feature>
<feature type="region of interest" description="RNA binding" evidence="1">
    <location>
        <begin position="249"/>
        <end position="255"/>
    </location>
</feature>
<feature type="region of interest" description="RNA binding; important for wobble base 34 recognition" evidence="1">
    <location>
        <begin position="273"/>
        <end position="277"/>
    </location>
</feature>
<feature type="active site" description="Proton acceptor" evidence="1">
    <location>
        <position position="94"/>
    </location>
</feature>
<feature type="active site" description="Nucleophile" evidence="1">
    <location>
        <position position="268"/>
    </location>
</feature>
<feature type="binding site" evidence="1">
    <location>
        <begin position="94"/>
        <end position="98"/>
    </location>
    <ligand>
        <name>substrate</name>
    </ligand>
</feature>
<feature type="binding site" evidence="1">
    <location>
        <position position="148"/>
    </location>
    <ligand>
        <name>substrate</name>
    </ligand>
</feature>
<feature type="binding site" evidence="1">
    <location>
        <position position="191"/>
    </location>
    <ligand>
        <name>substrate</name>
    </ligand>
</feature>
<feature type="binding site" evidence="1">
    <location>
        <position position="218"/>
    </location>
    <ligand>
        <name>substrate</name>
    </ligand>
</feature>
<feature type="binding site" evidence="1">
    <location>
        <position position="306"/>
    </location>
    <ligand>
        <name>Zn(2+)</name>
        <dbReference type="ChEBI" id="CHEBI:29105"/>
    </ligand>
</feature>
<feature type="binding site" evidence="1">
    <location>
        <position position="308"/>
    </location>
    <ligand>
        <name>Zn(2+)</name>
        <dbReference type="ChEBI" id="CHEBI:29105"/>
    </ligand>
</feature>
<feature type="binding site" evidence="1">
    <location>
        <position position="311"/>
    </location>
    <ligand>
        <name>Zn(2+)</name>
        <dbReference type="ChEBI" id="CHEBI:29105"/>
    </ligand>
</feature>
<feature type="binding site" evidence="1">
    <location>
        <position position="337"/>
    </location>
    <ligand>
        <name>Zn(2+)</name>
        <dbReference type="ChEBI" id="CHEBI:29105"/>
    </ligand>
</feature>
<evidence type="ECO:0000255" key="1">
    <source>
        <dbReference type="HAMAP-Rule" id="MF_00168"/>
    </source>
</evidence>
<name>TGT_BACCQ</name>
<gene>
    <name evidence="1" type="primary">tgt</name>
    <name type="ordered locus">BCQ_4203</name>
</gene>
<accession>B9IYZ1</accession>
<keyword id="KW-0328">Glycosyltransferase</keyword>
<keyword id="KW-0479">Metal-binding</keyword>
<keyword id="KW-0671">Queuosine biosynthesis</keyword>
<keyword id="KW-0808">Transferase</keyword>
<keyword id="KW-0819">tRNA processing</keyword>
<keyword id="KW-0862">Zinc</keyword>
<reference key="1">
    <citation type="journal article" date="2009" name="J. Bacteriol.">
        <title>Complete genome sequence of the extremophilic Bacillus cereus strain Q1 with industrial applications.</title>
        <authorList>
            <person name="Xiong Z."/>
            <person name="Jiang Y."/>
            <person name="Qi D."/>
            <person name="Lu H."/>
            <person name="Yang F."/>
            <person name="Yang J."/>
            <person name="Chen L."/>
            <person name="Sun L."/>
            <person name="Xu X."/>
            <person name="Xue Y."/>
            <person name="Zhu Y."/>
            <person name="Jin Q."/>
        </authorList>
    </citation>
    <scope>NUCLEOTIDE SEQUENCE [LARGE SCALE GENOMIC DNA]</scope>
    <source>
        <strain>Q1</strain>
    </source>
</reference>
<proteinExistence type="inferred from homology"/>
<comment type="function">
    <text evidence="1">Catalyzes the base-exchange of a guanine (G) residue with the queuine precursor 7-aminomethyl-7-deazaguanine (PreQ1) at position 34 (anticodon wobble position) in tRNAs with GU(N) anticodons (tRNA-Asp, -Asn, -His and -Tyr). Catalysis occurs through a double-displacement mechanism. The nucleophile active site attacks the C1' of nucleotide 34 to detach the guanine base from the RNA, forming a covalent enzyme-RNA intermediate. The proton acceptor active site deprotonates the incoming PreQ1, allowing a nucleophilic attack on the C1' of the ribose to form the product. After dissociation, two additional enzymatic reactions on the tRNA convert PreQ1 to queuine (Q), resulting in the hypermodified nucleoside queuosine (7-(((4,5-cis-dihydroxy-2-cyclopenten-1-yl)amino)methyl)-7-deazaguanosine).</text>
</comment>
<comment type="catalytic activity">
    <reaction evidence="1">
        <text>7-aminomethyl-7-carbaguanine + guanosine(34) in tRNA = 7-aminomethyl-7-carbaguanosine(34) in tRNA + guanine</text>
        <dbReference type="Rhea" id="RHEA:24104"/>
        <dbReference type="Rhea" id="RHEA-COMP:10341"/>
        <dbReference type="Rhea" id="RHEA-COMP:10342"/>
        <dbReference type="ChEBI" id="CHEBI:16235"/>
        <dbReference type="ChEBI" id="CHEBI:58703"/>
        <dbReference type="ChEBI" id="CHEBI:74269"/>
        <dbReference type="ChEBI" id="CHEBI:82833"/>
        <dbReference type="EC" id="2.4.2.29"/>
    </reaction>
</comment>
<comment type="cofactor">
    <cofactor evidence="1">
        <name>Zn(2+)</name>
        <dbReference type="ChEBI" id="CHEBI:29105"/>
    </cofactor>
    <text evidence="1">Binds 1 zinc ion per subunit.</text>
</comment>
<comment type="pathway">
    <text evidence="1">tRNA modification; tRNA-queuosine biosynthesis.</text>
</comment>
<comment type="subunit">
    <text evidence="1">Homodimer. Within each dimer, one monomer is responsible for RNA recognition and catalysis, while the other monomer binds to the replacement base PreQ1.</text>
</comment>
<comment type="similarity">
    <text evidence="1">Belongs to the queuine tRNA-ribosyltransferase family.</text>
</comment>
<organism>
    <name type="scientific">Bacillus cereus (strain Q1)</name>
    <dbReference type="NCBI Taxonomy" id="361100"/>
    <lineage>
        <taxon>Bacteria</taxon>
        <taxon>Bacillati</taxon>
        <taxon>Bacillota</taxon>
        <taxon>Bacilli</taxon>
        <taxon>Bacillales</taxon>
        <taxon>Bacillaceae</taxon>
        <taxon>Bacillus</taxon>
        <taxon>Bacillus cereus group</taxon>
    </lineage>
</organism>
<sequence length="379" mass="43213">MTAIRYEFIKTCKQTGARLGRVHTPHGSFDTPTFMPVGTLATVKTMSPEELKAMDSGIILSNTYHLWLRPGHEIVREAGGLHKFMNWDRAILTDSGGFQVFSLSDFRRIEEEGVHFRNHLNGDKLFLSPEKAMEIQNALGSDIMMAFDECPPFPATFEYMKKSVERTSRWAERCLKAHERPQDQGLFGIVQGGEFEELRRQSAKDLVSMDFPGYAVGGLSVGEPKDIMNRVLEFTTPLLPDNKPRYLMGVGSPDSLIDGAIRGIDMFDCVLPTRIARNGTCMTSEGRLVVKNAKFARDFGPLDPNCDCYTCKNYSRAYIRHLMKCDETFGIRLTSYHNLHFLLNLMEQVRQAIREDRLGDFREEFFEQYGFNKPNAKNF</sequence>
<protein>
    <recommendedName>
        <fullName evidence="1">Queuine tRNA-ribosyltransferase</fullName>
        <ecNumber evidence="1">2.4.2.29</ecNumber>
    </recommendedName>
    <alternativeName>
        <fullName evidence="1">Guanine insertion enzyme</fullName>
    </alternativeName>
    <alternativeName>
        <fullName evidence="1">tRNA-guanine transglycosylase</fullName>
    </alternativeName>
</protein>